<organism>
    <name type="scientific">Blochmanniella pennsylvanica (strain BPEN)</name>
    <dbReference type="NCBI Taxonomy" id="291272"/>
    <lineage>
        <taxon>Bacteria</taxon>
        <taxon>Pseudomonadati</taxon>
        <taxon>Pseudomonadota</taxon>
        <taxon>Gammaproteobacteria</taxon>
        <taxon>Enterobacterales</taxon>
        <taxon>Enterobacteriaceae</taxon>
        <taxon>ant endosymbionts</taxon>
        <taxon>Candidatus Blochmanniella</taxon>
    </lineage>
</organism>
<proteinExistence type="inferred from homology"/>
<protein>
    <recommendedName>
        <fullName evidence="1">tRNA uridine 5-carboxymethylaminomethyl modification enzyme MnmG</fullName>
    </recommendedName>
    <alternativeName>
        <fullName evidence="1">Glucose-inhibited division protein A</fullName>
    </alternativeName>
</protein>
<dbReference type="EMBL" id="CP000016">
    <property type="protein sequence ID" value="AAZ40651.1"/>
    <property type="molecule type" value="Genomic_DNA"/>
</dbReference>
<dbReference type="RefSeq" id="WP_011282557.1">
    <property type="nucleotide sequence ID" value="NC_007292.1"/>
</dbReference>
<dbReference type="SMR" id="Q494F8"/>
<dbReference type="STRING" id="291272.BPEN_001"/>
<dbReference type="KEGG" id="bpn:BPEN_001"/>
<dbReference type="eggNOG" id="COG0445">
    <property type="taxonomic scope" value="Bacteria"/>
</dbReference>
<dbReference type="HOGENOM" id="CLU_007831_2_2_6"/>
<dbReference type="OrthoDB" id="9815560at2"/>
<dbReference type="Proteomes" id="UP000007794">
    <property type="component" value="Chromosome"/>
</dbReference>
<dbReference type="GO" id="GO:0005829">
    <property type="term" value="C:cytosol"/>
    <property type="evidence" value="ECO:0007669"/>
    <property type="project" value="TreeGrafter"/>
</dbReference>
<dbReference type="GO" id="GO:0050660">
    <property type="term" value="F:flavin adenine dinucleotide binding"/>
    <property type="evidence" value="ECO:0007669"/>
    <property type="project" value="UniProtKB-UniRule"/>
</dbReference>
<dbReference type="GO" id="GO:0030488">
    <property type="term" value="P:tRNA methylation"/>
    <property type="evidence" value="ECO:0007669"/>
    <property type="project" value="TreeGrafter"/>
</dbReference>
<dbReference type="GO" id="GO:0002098">
    <property type="term" value="P:tRNA wobble uridine modification"/>
    <property type="evidence" value="ECO:0007669"/>
    <property type="project" value="InterPro"/>
</dbReference>
<dbReference type="FunFam" id="1.10.10.1800:FF:000001">
    <property type="entry name" value="tRNA uridine 5-carboxymethylaminomethyl modification enzyme MnmG"/>
    <property type="match status" value="1"/>
</dbReference>
<dbReference type="FunFam" id="1.10.150.570:FF:000001">
    <property type="entry name" value="tRNA uridine 5-carboxymethylaminomethyl modification enzyme MnmG"/>
    <property type="match status" value="1"/>
</dbReference>
<dbReference type="FunFam" id="3.50.50.60:FF:000002">
    <property type="entry name" value="tRNA uridine 5-carboxymethylaminomethyl modification enzyme MnmG"/>
    <property type="match status" value="1"/>
</dbReference>
<dbReference type="FunFam" id="3.50.50.60:FF:000010">
    <property type="entry name" value="tRNA uridine 5-carboxymethylaminomethyl modification enzyme MnmG"/>
    <property type="match status" value="1"/>
</dbReference>
<dbReference type="Gene3D" id="3.50.50.60">
    <property type="entry name" value="FAD/NAD(P)-binding domain"/>
    <property type="match status" value="2"/>
</dbReference>
<dbReference type="Gene3D" id="1.10.150.570">
    <property type="entry name" value="GidA associated domain, C-terminal subdomain"/>
    <property type="match status" value="1"/>
</dbReference>
<dbReference type="Gene3D" id="1.10.10.1800">
    <property type="entry name" value="tRNA uridine 5-carboxymethylaminomethyl modification enzyme MnmG/GidA"/>
    <property type="match status" value="1"/>
</dbReference>
<dbReference type="HAMAP" id="MF_00129">
    <property type="entry name" value="MnmG_GidA"/>
    <property type="match status" value="1"/>
</dbReference>
<dbReference type="InterPro" id="IPR036188">
    <property type="entry name" value="FAD/NAD-bd_sf"/>
</dbReference>
<dbReference type="InterPro" id="IPR049312">
    <property type="entry name" value="GIDA_C_N"/>
</dbReference>
<dbReference type="InterPro" id="IPR004416">
    <property type="entry name" value="MnmG"/>
</dbReference>
<dbReference type="InterPro" id="IPR002218">
    <property type="entry name" value="MnmG-rel"/>
</dbReference>
<dbReference type="InterPro" id="IPR020595">
    <property type="entry name" value="MnmG-rel_CS"/>
</dbReference>
<dbReference type="InterPro" id="IPR026904">
    <property type="entry name" value="MnmG_C"/>
</dbReference>
<dbReference type="InterPro" id="IPR047001">
    <property type="entry name" value="MnmG_C_subdom"/>
</dbReference>
<dbReference type="InterPro" id="IPR044920">
    <property type="entry name" value="MnmG_C_subdom_sf"/>
</dbReference>
<dbReference type="InterPro" id="IPR040131">
    <property type="entry name" value="MnmG_N"/>
</dbReference>
<dbReference type="NCBIfam" id="TIGR00136">
    <property type="entry name" value="mnmG_gidA"/>
    <property type="match status" value="1"/>
</dbReference>
<dbReference type="PANTHER" id="PTHR11806">
    <property type="entry name" value="GLUCOSE INHIBITED DIVISION PROTEIN A"/>
    <property type="match status" value="1"/>
</dbReference>
<dbReference type="PANTHER" id="PTHR11806:SF0">
    <property type="entry name" value="PROTEIN MTO1 HOMOLOG, MITOCHONDRIAL"/>
    <property type="match status" value="1"/>
</dbReference>
<dbReference type="Pfam" id="PF01134">
    <property type="entry name" value="GIDA"/>
    <property type="match status" value="1"/>
</dbReference>
<dbReference type="Pfam" id="PF21680">
    <property type="entry name" value="GIDA_C_1st"/>
    <property type="match status" value="1"/>
</dbReference>
<dbReference type="Pfam" id="PF13932">
    <property type="entry name" value="SAM_GIDA_C"/>
    <property type="match status" value="1"/>
</dbReference>
<dbReference type="SMART" id="SM01228">
    <property type="entry name" value="GIDA_assoc_3"/>
    <property type="match status" value="1"/>
</dbReference>
<dbReference type="SUPFAM" id="SSF51905">
    <property type="entry name" value="FAD/NAD(P)-binding domain"/>
    <property type="match status" value="1"/>
</dbReference>
<dbReference type="PROSITE" id="PS01280">
    <property type="entry name" value="GIDA_1"/>
    <property type="match status" value="1"/>
</dbReference>
<sequence>MFYPIHFDVIVVGGGHAGTEAALASARMQCNTLLITHNIDTLGQMSCNPAVGGIGKGHLVKEIDAMGGSMAYAIDQSGIQFRVLNSSKGAAVRATRAQADKILYRQAIRSILEYQKFLLVIQASVEDLIVSGNKIVGVITPKLGMKFSGTSVVLTTGTFLNGKIHIGMNNFRGGRSGDSESSSLLSERLKELSFQISRLKTGTSPRVHTKGINFGSLRAQYSDDPIPVFSFIGSTKLHPTQVPCYITHTNNKTHEIVRSNLYQSPMYTGLIKGIAPRYCPSIEDKITRFSDRNAHQIFLEPEGLTTPEVYLNGISTSLPFCVQMQMIKSIQGLENACIIRPGYAIEYDFFDPRDLKLTLESKIISGLFFSGQINGTTGYEEAAAQGLLAGINAARFSKNKEGWYPRRDQAYLGVLVDDLCTHGTEEPYRMFTSRAEYRLSLREDNADLRLTEIARQLGLIDESRWKAFCCKKENIEKERQRLRNTYIFPYSSDVAQLNNFLKTPLTHETNGEDLLRRPEINYKKLSQLSTFSPSILDRQVFEQIEIQIKYEGYIRHQQEEIKRHIYNENTLLPTDIDFNIVSGLSQEVIDKLNNYKPYSIGQASRISGITPAAISNLLVWLKKQGLLEHNTC</sequence>
<comment type="function">
    <text evidence="1">NAD-binding protein involved in the addition of a carboxymethylaminomethyl (cmnm) group at the wobble position (U34) of certain tRNAs, forming tRNA-cmnm(5)s(2)U34.</text>
</comment>
<comment type="cofactor">
    <cofactor evidence="1">
        <name>FAD</name>
        <dbReference type="ChEBI" id="CHEBI:57692"/>
    </cofactor>
</comment>
<comment type="subunit">
    <text evidence="1">Homodimer. Heterotetramer of two MnmE and two MnmG subunits.</text>
</comment>
<comment type="subcellular location">
    <subcellularLocation>
        <location evidence="1">Cytoplasm</location>
    </subcellularLocation>
</comment>
<comment type="similarity">
    <text evidence="1">Belongs to the MnmG family.</text>
</comment>
<accession>Q494F8</accession>
<gene>
    <name evidence="1" type="primary">mnmG</name>
    <name evidence="1" type="synonym">gidA</name>
    <name type="ordered locus">BPEN_001</name>
</gene>
<feature type="chain" id="PRO_1000016553" description="tRNA uridine 5-carboxymethylaminomethyl modification enzyme MnmG">
    <location>
        <begin position="1"/>
        <end position="632"/>
    </location>
</feature>
<feature type="binding site" evidence="1">
    <location>
        <begin position="13"/>
        <end position="18"/>
    </location>
    <ligand>
        <name>FAD</name>
        <dbReference type="ChEBI" id="CHEBI:57692"/>
    </ligand>
</feature>
<feature type="binding site" evidence="1">
    <location>
        <position position="125"/>
    </location>
    <ligand>
        <name>FAD</name>
        <dbReference type="ChEBI" id="CHEBI:57692"/>
    </ligand>
</feature>
<feature type="binding site" evidence="1">
    <location>
        <position position="182"/>
    </location>
    <ligand>
        <name>FAD</name>
        <dbReference type="ChEBI" id="CHEBI:57692"/>
    </ligand>
</feature>
<feature type="binding site" evidence="1">
    <location>
        <begin position="275"/>
        <end position="289"/>
    </location>
    <ligand>
        <name>NAD(+)</name>
        <dbReference type="ChEBI" id="CHEBI:57540"/>
    </ligand>
</feature>
<feature type="binding site" evidence="1">
    <location>
        <position position="372"/>
    </location>
    <ligand>
        <name>FAD</name>
        <dbReference type="ChEBI" id="CHEBI:57692"/>
    </ligand>
</feature>
<name>MNMG_BLOPB</name>
<reference key="1">
    <citation type="journal article" date="2005" name="Genome Res.">
        <title>Genome sequence of Blochmannia pennsylvanicus indicates parallel evolutionary trends among bacterial mutualists of insects.</title>
        <authorList>
            <person name="Degnan P.H."/>
            <person name="Lazarus A.B."/>
            <person name="Wernegreen J.J."/>
        </authorList>
    </citation>
    <scope>NUCLEOTIDE SEQUENCE [LARGE SCALE GENOMIC DNA]</scope>
    <source>
        <strain>BPEN</strain>
    </source>
</reference>
<evidence type="ECO:0000255" key="1">
    <source>
        <dbReference type="HAMAP-Rule" id="MF_00129"/>
    </source>
</evidence>
<keyword id="KW-0963">Cytoplasm</keyword>
<keyword id="KW-0274">FAD</keyword>
<keyword id="KW-0285">Flavoprotein</keyword>
<keyword id="KW-0520">NAD</keyword>
<keyword id="KW-1185">Reference proteome</keyword>
<keyword id="KW-0819">tRNA processing</keyword>